<reference key="1">
    <citation type="journal article" date="2008" name="Genomics">
        <title>Characterization of ST-4821 complex, a unique Neisseria meningitidis clone.</title>
        <authorList>
            <person name="Peng J."/>
            <person name="Yang L."/>
            <person name="Yang F."/>
            <person name="Yang J."/>
            <person name="Yan Y."/>
            <person name="Nie H."/>
            <person name="Zhang X."/>
            <person name="Xiong Z."/>
            <person name="Jiang Y."/>
            <person name="Cheng F."/>
            <person name="Xu X."/>
            <person name="Chen S."/>
            <person name="Sun L."/>
            <person name="Li W."/>
            <person name="Shen Y."/>
            <person name="Shao Z."/>
            <person name="Liang X."/>
            <person name="Xu J."/>
            <person name="Jin Q."/>
        </authorList>
    </citation>
    <scope>NUCLEOTIDE SEQUENCE [LARGE SCALE GENOMIC DNA]</scope>
    <source>
        <strain>053442</strain>
    </source>
</reference>
<keyword id="KW-0028">Amino-acid biosynthesis</keyword>
<keyword id="KW-0057">Aromatic amino acid biosynthesis</keyword>
<keyword id="KW-0274">FAD</keyword>
<keyword id="KW-0285">Flavoprotein</keyword>
<keyword id="KW-0288">FMN</keyword>
<keyword id="KW-0456">Lyase</keyword>
<keyword id="KW-0521">NADP</keyword>
<name>AROC_NEIM0</name>
<sequence length="366" mass="39393">MAGNTFGQLFTVTTFGESHGAGLGCIIDGCPPGLELSEADIQFDLDRRKPGTSRHVTQRRETDQVEILSGVFKGKTTGTPIALLIRNTDQRSKDYGNIAQSFRPGHADYTYWHKYGTRDYRGGGRSSARETAARVAAGAVAKKWLKEKFGTEITAYVTQVGEKEIRFEGCEHISQNPFFAANHSQIAELENYMDSVRKSLDSVGAKLHIEAANVPVGLGEPVFDRLDAEIAYAMMGINAVKGVEIGAGFDSVTQRGSEHGDELTPQGFLSNHSGGILGGISTGQDICVNIAIKPTSSIATPRRSIDINGNPIELATHGRHDPCVGLRAAPIAEAMLALVLIDHALRHRAQNADVAVDTPDIARSDK</sequence>
<protein>
    <recommendedName>
        <fullName evidence="1">Chorismate synthase</fullName>
        <shortName evidence="1">CS</shortName>
        <ecNumber evidence="1">4.2.3.5</ecNumber>
    </recommendedName>
    <alternativeName>
        <fullName evidence="1">5-enolpyruvylshikimate-3-phosphate phospholyase</fullName>
    </alternativeName>
</protein>
<organism>
    <name type="scientific">Neisseria meningitidis serogroup C (strain 053442)</name>
    <dbReference type="NCBI Taxonomy" id="374833"/>
    <lineage>
        <taxon>Bacteria</taxon>
        <taxon>Pseudomonadati</taxon>
        <taxon>Pseudomonadota</taxon>
        <taxon>Betaproteobacteria</taxon>
        <taxon>Neisseriales</taxon>
        <taxon>Neisseriaceae</taxon>
        <taxon>Neisseria</taxon>
    </lineage>
</organism>
<comment type="function">
    <text evidence="1">Catalyzes the anti-1,4-elimination of the C-3 phosphate and the C-6 proR hydrogen from 5-enolpyruvylshikimate-3-phosphate (EPSP) to yield chorismate, which is the branch point compound that serves as the starting substrate for the three terminal pathways of aromatic amino acid biosynthesis. This reaction introduces a second double bond into the aromatic ring system.</text>
</comment>
<comment type="catalytic activity">
    <reaction evidence="1">
        <text>5-O-(1-carboxyvinyl)-3-phosphoshikimate = chorismate + phosphate</text>
        <dbReference type="Rhea" id="RHEA:21020"/>
        <dbReference type="ChEBI" id="CHEBI:29748"/>
        <dbReference type="ChEBI" id="CHEBI:43474"/>
        <dbReference type="ChEBI" id="CHEBI:57701"/>
        <dbReference type="EC" id="4.2.3.5"/>
    </reaction>
</comment>
<comment type="cofactor">
    <cofactor evidence="1">
        <name>FMNH2</name>
        <dbReference type="ChEBI" id="CHEBI:57618"/>
    </cofactor>
    <text evidence="1">Reduced FMN (FMNH(2)).</text>
</comment>
<comment type="pathway">
    <text evidence="1">Metabolic intermediate biosynthesis; chorismate biosynthesis; chorismate from D-erythrose 4-phosphate and phosphoenolpyruvate: step 7/7.</text>
</comment>
<comment type="subunit">
    <text evidence="1">Homotetramer.</text>
</comment>
<comment type="similarity">
    <text evidence="1">Belongs to the chorismate synthase family.</text>
</comment>
<evidence type="ECO:0000255" key="1">
    <source>
        <dbReference type="HAMAP-Rule" id="MF_00300"/>
    </source>
</evidence>
<dbReference type="EC" id="4.2.3.5" evidence="1"/>
<dbReference type="EMBL" id="CP000381">
    <property type="protein sequence ID" value="ABX73741.1"/>
    <property type="molecule type" value="Genomic_DNA"/>
</dbReference>
<dbReference type="RefSeq" id="WP_002220457.1">
    <property type="nucleotide sequence ID" value="NC_010120.1"/>
</dbReference>
<dbReference type="SMR" id="A9M1Q2"/>
<dbReference type="KEGG" id="nmn:NMCC_1593"/>
<dbReference type="HOGENOM" id="CLU_034547_0_2_4"/>
<dbReference type="UniPathway" id="UPA00053">
    <property type="reaction ID" value="UER00090"/>
</dbReference>
<dbReference type="Proteomes" id="UP000001177">
    <property type="component" value="Chromosome"/>
</dbReference>
<dbReference type="GO" id="GO:0005829">
    <property type="term" value="C:cytosol"/>
    <property type="evidence" value="ECO:0007669"/>
    <property type="project" value="TreeGrafter"/>
</dbReference>
<dbReference type="GO" id="GO:0004107">
    <property type="term" value="F:chorismate synthase activity"/>
    <property type="evidence" value="ECO:0007669"/>
    <property type="project" value="UniProtKB-UniRule"/>
</dbReference>
<dbReference type="GO" id="GO:0010181">
    <property type="term" value="F:FMN binding"/>
    <property type="evidence" value="ECO:0007669"/>
    <property type="project" value="TreeGrafter"/>
</dbReference>
<dbReference type="GO" id="GO:0008652">
    <property type="term" value="P:amino acid biosynthetic process"/>
    <property type="evidence" value="ECO:0007669"/>
    <property type="project" value="UniProtKB-KW"/>
</dbReference>
<dbReference type="GO" id="GO:0009073">
    <property type="term" value="P:aromatic amino acid family biosynthetic process"/>
    <property type="evidence" value="ECO:0007669"/>
    <property type="project" value="UniProtKB-KW"/>
</dbReference>
<dbReference type="GO" id="GO:0009423">
    <property type="term" value="P:chorismate biosynthetic process"/>
    <property type="evidence" value="ECO:0007669"/>
    <property type="project" value="UniProtKB-UniRule"/>
</dbReference>
<dbReference type="CDD" id="cd07304">
    <property type="entry name" value="Chorismate_synthase"/>
    <property type="match status" value="1"/>
</dbReference>
<dbReference type="FunFam" id="3.60.150.10:FF:000001">
    <property type="entry name" value="Chorismate synthase"/>
    <property type="match status" value="1"/>
</dbReference>
<dbReference type="Gene3D" id="3.60.150.10">
    <property type="entry name" value="Chorismate synthase AroC"/>
    <property type="match status" value="1"/>
</dbReference>
<dbReference type="HAMAP" id="MF_00300">
    <property type="entry name" value="Chorismate_synth"/>
    <property type="match status" value="1"/>
</dbReference>
<dbReference type="InterPro" id="IPR000453">
    <property type="entry name" value="Chorismate_synth"/>
</dbReference>
<dbReference type="InterPro" id="IPR035904">
    <property type="entry name" value="Chorismate_synth_AroC_sf"/>
</dbReference>
<dbReference type="InterPro" id="IPR020541">
    <property type="entry name" value="Chorismate_synthase_CS"/>
</dbReference>
<dbReference type="NCBIfam" id="TIGR00033">
    <property type="entry name" value="aroC"/>
    <property type="match status" value="1"/>
</dbReference>
<dbReference type="NCBIfam" id="NF003793">
    <property type="entry name" value="PRK05382.1"/>
    <property type="match status" value="1"/>
</dbReference>
<dbReference type="PANTHER" id="PTHR21085">
    <property type="entry name" value="CHORISMATE SYNTHASE"/>
    <property type="match status" value="1"/>
</dbReference>
<dbReference type="PANTHER" id="PTHR21085:SF0">
    <property type="entry name" value="CHORISMATE SYNTHASE"/>
    <property type="match status" value="1"/>
</dbReference>
<dbReference type="Pfam" id="PF01264">
    <property type="entry name" value="Chorismate_synt"/>
    <property type="match status" value="1"/>
</dbReference>
<dbReference type="PIRSF" id="PIRSF001456">
    <property type="entry name" value="Chorismate_synth"/>
    <property type="match status" value="1"/>
</dbReference>
<dbReference type="SUPFAM" id="SSF103263">
    <property type="entry name" value="Chorismate synthase, AroC"/>
    <property type="match status" value="1"/>
</dbReference>
<dbReference type="PROSITE" id="PS00787">
    <property type="entry name" value="CHORISMATE_SYNTHASE_1"/>
    <property type="match status" value="1"/>
</dbReference>
<dbReference type="PROSITE" id="PS00788">
    <property type="entry name" value="CHORISMATE_SYNTHASE_2"/>
    <property type="match status" value="1"/>
</dbReference>
<dbReference type="PROSITE" id="PS00789">
    <property type="entry name" value="CHORISMATE_SYNTHASE_3"/>
    <property type="match status" value="1"/>
</dbReference>
<gene>
    <name evidence="1" type="primary">aroC</name>
    <name type="ordered locus">NMCC_1593</name>
</gene>
<proteinExistence type="inferred from homology"/>
<feature type="chain" id="PRO_1000079000" description="Chorismate synthase">
    <location>
        <begin position="1"/>
        <end position="366"/>
    </location>
</feature>
<feature type="binding site" evidence="1">
    <location>
        <position position="48"/>
    </location>
    <ligand>
        <name>NADP(+)</name>
        <dbReference type="ChEBI" id="CHEBI:58349"/>
    </ligand>
</feature>
<feature type="binding site" evidence="1">
    <location>
        <position position="54"/>
    </location>
    <ligand>
        <name>NADP(+)</name>
        <dbReference type="ChEBI" id="CHEBI:58349"/>
    </ligand>
</feature>
<feature type="binding site" evidence="1">
    <location>
        <begin position="125"/>
        <end position="127"/>
    </location>
    <ligand>
        <name>FMN</name>
        <dbReference type="ChEBI" id="CHEBI:58210"/>
    </ligand>
</feature>
<feature type="binding site" evidence="1">
    <location>
        <begin position="238"/>
        <end position="239"/>
    </location>
    <ligand>
        <name>FMN</name>
        <dbReference type="ChEBI" id="CHEBI:58210"/>
    </ligand>
</feature>
<feature type="binding site" evidence="1">
    <location>
        <position position="278"/>
    </location>
    <ligand>
        <name>FMN</name>
        <dbReference type="ChEBI" id="CHEBI:58210"/>
    </ligand>
</feature>
<feature type="binding site" evidence="1">
    <location>
        <begin position="293"/>
        <end position="297"/>
    </location>
    <ligand>
        <name>FMN</name>
        <dbReference type="ChEBI" id="CHEBI:58210"/>
    </ligand>
</feature>
<feature type="binding site" evidence="1">
    <location>
        <position position="319"/>
    </location>
    <ligand>
        <name>FMN</name>
        <dbReference type="ChEBI" id="CHEBI:58210"/>
    </ligand>
</feature>
<accession>A9M1Q2</accession>